<accession>P0DJY2</accession>
<proteinExistence type="evidence at protein level"/>
<sequence length="92" mass="10901">PIKKQILPTYIIRNSRRPLKKTQLKRNKSPPFMMWKLQIGSIPPWLKTLHRLGAWMIRTVLFSFYNAPYSLTTLRSLLDQQQMITNPSIDMC</sequence>
<name>POG_ABPVR</name>
<dbReference type="EMBL" id="AF150629">
    <property type="status" value="NOT_ANNOTATED_CDS"/>
    <property type="molecule type" value="Genomic_RNA"/>
</dbReference>
<dbReference type="Proteomes" id="UP000006040">
    <property type="component" value="Segment"/>
</dbReference>
<comment type="caution">
    <text evidence="1">Translated through a Met-tRNA-independent initiatiation on a CCG proline adjacent to the unusual Internal Ribosome Entry Site (IRES) localized upstream the viral structural polyprotein ORF (ORF2).</text>
</comment>
<reference key="1">
    <citation type="journal article" date="2000" name="Virology">
        <title>Analysis of the complete genome sequence of acute bee paralysis virus shows that it belongs to the novel group of insect-infecting RNA viruses.</title>
        <authorList>
            <person name="Govan V.A."/>
            <person name="Leat N."/>
            <person name="Allsopp M."/>
            <person name="Davison S."/>
        </authorList>
    </citation>
    <scope>NUCLEOTIDE SEQUENCE [GENOMIC RNA]</scope>
</reference>
<reference key="2">
    <citation type="journal article" date="2009" name="Virol. J.">
        <title>A potentially novel overlapping gene in the genomes of Israeli acute paralysis virus and its relatives.</title>
        <authorList>
            <person name="Sabath N."/>
            <person name="Price N."/>
            <person name="Graur D."/>
        </authorList>
    </citation>
    <scope>IDENTIFICATION</scope>
    <source>
        <strain>Israeli acute paralysis dicistrovirus</strain>
    </source>
</reference>
<reference key="3">
    <citation type="journal article" date="2012" name="Proc. Natl. Acad. Sci. U.S.A.">
        <title>Alternative reading frame selection mediated by a tRNA-like domain of an internal ribosome entry site.</title>
        <authorList>
            <person name="Ren Q."/>
            <person name="Wang Q.S."/>
            <person name="Firth A.E."/>
            <person name="Chan M.M."/>
            <person name="Gouw J.W."/>
            <person name="Guarna M.M."/>
            <person name="Foster L.J."/>
            <person name="Atkins J.F."/>
            <person name="Jan E."/>
        </authorList>
    </citation>
    <scope>CHARACTERIZATION</scope>
    <source>
        <strain>Israeli acute paralysis dicistrovirus</strain>
    </source>
</reference>
<feature type="chain" id="PRO_0000423159" description="Putative protein pog">
    <location>
        <begin position="1"/>
        <end position="92"/>
    </location>
</feature>
<keyword id="KW-1185">Reference proteome</keyword>
<organism>
    <name type="scientific">Acute bee paralysis virus (strain Rothamsted)</name>
    <name type="common">ABPV</name>
    <dbReference type="NCBI Taxonomy" id="1217067"/>
    <lineage>
        <taxon>Viruses</taxon>
        <taxon>Riboviria</taxon>
        <taxon>Orthornavirae</taxon>
        <taxon>Pisuviricota</taxon>
        <taxon>Pisoniviricetes</taxon>
        <taxon>Picornavirales</taxon>
        <taxon>Dicistroviridae</taxon>
        <taxon>Aparavirus</taxon>
        <taxon>Aparavirus apisacutum</taxon>
    </lineage>
</organism>
<organismHost>
    <name type="scientific">Apis mellifera</name>
    <name type="common">Honeybee</name>
    <dbReference type="NCBI Taxonomy" id="7460"/>
</organismHost>
<protein>
    <recommendedName>
        <fullName>Putative protein pog</fullName>
    </recommendedName>
    <alternativeName>
        <fullName>ORFx protein</fullName>
    </alternativeName>
</protein>
<evidence type="ECO:0000305" key="1"/>